<keyword id="KW-0119">Carbohydrate metabolism</keyword>
<keyword id="KW-0378">Hydrolase</keyword>
<keyword id="KW-0460">Magnesium</keyword>
<keyword id="KW-0479">Metal-binding</keyword>
<organism>
    <name type="scientific">Pseudomonas savastanoi pv. phaseolicola (strain 1448A / Race 6)</name>
    <name type="common">Pseudomonas syringae pv. phaseolicola (strain 1448A / Race 6)</name>
    <dbReference type="NCBI Taxonomy" id="264730"/>
    <lineage>
        <taxon>Bacteria</taxon>
        <taxon>Pseudomonadati</taxon>
        <taxon>Pseudomonadota</taxon>
        <taxon>Gammaproteobacteria</taxon>
        <taxon>Pseudomonadales</taxon>
        <taxon>Pseudomonadaceae</taxon>
        <taxon>Pseudomonas</taxon>
    </lineage>
</organism>
<name>GPH_PSE14</name>
<protein>
    <recommendedName>
        <fullName evidence="1">Phosphoglycolate phosphatase</fullName>
        <shortName evidence="1">PGP</shortName>
        <shortName evidence="1">PGPase</shortName>
        <ecNumber evidence="1">3.1.3.18</ecNumber>
    </recommendedName>
</protein>
<reference key="1">
    <citation type="journal article" date="2005" name="J. Bacteriol.">
        <title>Whole-genome sequence analysis of Pseudomonas syringae pv. phaseolicola 1448A reveals divergence among pathovars in genes involved in virulence and transposition.</title>
        <authorList>
            <person name="Joardar V."/>
            <person name="Lindeberg M."/>
            <person name="Jackson R.W."/>
            <person name="Selengut J."/>
            <person name="Dodson R."/>
            <person name="Brinkac L.M."/>
            <person name="Daugherty S.C."/>
            <person name="DeBoy R.T."/>
            <person name="Durkin A.S."/>
            <person name="Gwinn Giglio M."/>
            <person name="Madupu R."/>
            <person name="Nelson W.C."/>
            <person name="Rosovitz M.J."/>
            <person name="Sullivan S.A."/>
            <person name="Crabtree J."/>
            <person name="Creasy T."/>
            <person name="Davidsen T.M."/>
            <person name="Haft D.H."/>
            <person name="Zafar N."/>
            <person name="Zhou L."/>
            <person name="Halpin R."/>
            <person name="Holley T."/>
            <person name="Khouri H.M."/>
            <person name="Feldblyum T.V."/>
            <person name="White O."/>
            <person name="Fraser C.M."/>
            <person name="Chatterjee A.K."/>
            <person name="Cartinhour S."/>
            <person name="Schneider D."/>
            <person name="Mansfield J.W."/>
            <person name="Collmer A."/>
            <person name="Buell R."/>
        </authorList>
    </citation>
    <scope>NUCLEOTIDE SEQUENCE [LARGE SCALE GENOMIC DNA]</scope>
    <source>
        <strain>1448A / Race 6</strain>
    </source>
</reference>
<proteinExistence type="inferred from homology"/>
<dbReference type="EC" id="3.1.3.18" evidence="1"/>
<dbReference type="EMBL" id="CP000058">
    <property type="protein sequence ID" value="AAZ36472.1"/>
    <property type="status" value="ALT_INIT"/>
    <property type="molecule type" value="Genomic_DNA"/>
</dbReference>
<dbReference type="RefSeq" id="WP_041924419.1">
    <property type="nucleotide sequence ID" value="NC_005773.3"/>
</dbReference>
<dbReference type="SMR" id="Q48NS2"/>
<dbReference type="KEGG" id="psp:PSPPH_0648"/>
<dbReference type="eggNOG" id="COG0546">
    <property type="taxonomic scope" value="Bacteria"/>
</dbReference>
<dbReference type="HOGENOM" id="CLU_045011_19_1_6"/>
<dbReference type="UniPathway" id="UPA00865">
    <property type="reaction ID" value="UER00834"/>
</dbReference>
<dbReference type="Proteomes" id="UP000000551">
    <property type="component" value="Chromosome"/>
</dbReference>
<dbReference type="GO" id="GO:0005829">
    <property type="term" value="C:cytosol"/>
    <property type="evidence" value="ECO:0007669"/>
    <property type="project" value="TreeGrafter"/>
</dbReference>
<dbReference type="GO" id="GO:0046872">
    <property type="term" value="F:metal ion binding"/>
    <property type="evidence" value="ECO:0007669"/>
    <property type="project" value="UniProtKB-KW"/>
</dbReference>
<dbReference type="GO" id="GO:0008967">
    <property type="term" value="F:phosphoglycolate phosphatase activity"/>
    <property type="evidence" value="ECO:0007669"/>
    <property type="project" value="UniProtKB-UniRule"/>
</dbReference>
<dbReference type="GO" id="GO:0005975">
    <property type="term" value="P:carbohydrate metabolic process"/>
    <property type="evidence" value="ECO:0007669"/>
    <property type="project" value="InterPro"/>
</dbReference>
<dbReference type="GO" id="GO:0006281">
    <property type="term" value="P:DNA repair"/>
    <property type="evidence" value="ECO:0007669"/>
    <property type="project" value="TreeGrafter"/>
</dbReference>
<dbReference type="GO" id="GO:0046295">
    <property type="term" value="P:glycolate biosynthetic process"/>
    <property type="evidence" value="ECO:0007669"/>
    <property type="project" value="UniProtKB-UniRule"/>
</dbReference>
<dbReference type="CDD" id="cd16417">
    <property type="entry name" value="HAD_PGPase"/>
    <property type="match status" value="1"/>
</dbReference>
<dbReference type="FunFam" id="3.40.50.1000:FF:000022">
    <property type="entry name" value="Phosphoglycolate phosphatase"/>
    <property type="match status" value="1"/>
</dbReference>
<dbReference type="Gene3D" id="3.40.50.1000">
    <property type="entry name" value="HAD superfamily/HAD-like"/>
    <property type="match status" value="1"/>
</dbReference>
<dbReference type="Gene3D" id="1.10.150.240">
    <property type="entry name" value="Putative phosphatase, domain 2"/>
    <property type="match status" value="1"/>
</dbReference>
<dbReference type="HAMAP" id="MF_00495">
    <property type="entry name" value="GPH_hydrolase_bact"/>
    <property type="match status" value="1"/>
</dbReference>
<dbReference type="InterPro" id="IPR050155">
    <property type="entry name" value="HAD-like_hydrolase_sf"/>
</dbReference>
<dbReference type="InterPro" id="IPR036412">
    <property type="entry name" value="HAD-like_sf"/>
</dbReference>
<dbReference type="InterPro" id="IPR006439">
    <property type="entry name" value="HAD-SF_hydro_IA"/>
</dbReference>
<dbReference type="InterPro" id="IPR041492">
    <property type="entry name" value="HAD_2"/>
</dbReference>
<dbReference type="InterPro" id="IPR023214">
    <property type="entry name" value="HAD_sf"/>
</dbReference>
<dbReference type="InterPro" id="IPR023198">
    <property type="entry name" value="PGP-like_dom2"/>
</dbReference>
<dbReference type="InterPro" id="IPR037512">
    <property type="entry name" value="PGPase_prok"/>
</dbReference>
<dbReference type="NCBIfam" id="TIGR01549">
    <property type="entry name" value="HAD-SF-IA-v1"/>
    <property type="match status" value="1"/>
</dbReference>
<dbReference type="NCBIfam" id="TIGR01509">
    <property type="entry name" value="HAD-SF-IA-v3"/>
    <property type="match status" value="1"/>
</dbReference>
<dbReference type="NCBIfam" id="TIGR01449">
    <property type="entry name" value="PGP_bact"/>
    <property type="match status" value="1"/>
</dbReference>
<dbReference type="NCBIfam" id="NF009695">
    <property type="entry name" value="PRK13222.1-2"/>
    <property type="match status" value="1"/>
</dbReference>
<dbReference type="NCBIfam" id="NF009698">
    <property type="entry name" value="PRK13223.1"/>
    <property type="match status" value="1"/>
</dbReference>
<dbReference type="PANTHER" id="PTHR43434">
    <property type="entry name" value="PHOSPHOGLYCOLATE PHOSPHATASE"/>
    <property type="match status" value="1"/>
</dbReference>
<dbReference type="PANTHER" id="PTHR43434:SF1">
    <property type="entry name" value="PHOSPHOGLYCOLATE PHOSPHATASE"/>
    <property type="match status" value="1"/>
</dbReference>
<dbReference type="Pfam" id="PF13419">
    <property type="entry name" value="HAD_2"/>
    <property type="match status" value="1"/>
</dbReference>
<dbReference type="PRINTS" id="PR00413">
    <property type="entry name" value="HADHALOGNASE"/>
</dbReference>
<dbReference type="SFLD" id="SFLDG01135">
    <property type="entry name" value="C1.5.6:_HAD__Beta-PGM__Phospha"/>
    <property type="match status" value="1"/>
</dbReference>
<dbReference type="SFLD" id="SFLDG01129">
    <property type="entry name" value="C1.5:_HAD__Beta-PGM__Phosphata"/>
    <property type="match status" value="1"/>
</dbReference>
<dbReference type="SUPFAM" id="SSF56784">
    <property type="entry name" value="HAD-like"/>
    <property type="match status" value="1"/>
</dbReference>
<sequence length="272" mass="30016">MSGFEQLFAGKLPKLVMFDLDGTLVDSVPDLAVAVDTMLAELGRPIAGLESVRAWVGNGAPVLVRRALANHLDHSGVDDELAEQGLEIFMRAYAQKHEFTVVYPGVRETLKWLQKMGVEMALITNKPERFVAPLLDEMKLGRFFRWIIGGDTMPQKKPDPAALFFVMKMAGVPASQALFVGDSRSDVQAAKAAGVACVALSYGYNHGRPIAEENPAMVIDDLRKLIPGCLDMDAEILLPDINSPSSRESIVVVTRKLWMKVIKALARWRWRA</sequence>
<accession>Q48NS2</accession>
<evidence type="ECO:0000255" key="1">
    <source>
        <dbReference type="HAMAP-Rule" id="MF_00495"/>
    </source>
</evidence>
<evidence type="ECO:0000305" key="2"/>
<gene>
    <name type="ordered locus">PSPPH_0648</name>
</gene>
<feature type="chain" id="PRO_0000238169" description="Phosphoglycolate phosphatase">
    <location>
        <begin position="1"/>
        <end position="272"/>
    </location>
</feature>
<feature type="active site" description="Nucleophile" evidence="1">
    <location>
        <position position="19"/>
    </location>
</feature>
<feature type="binding site" evidence="1">
    <location>
        <position position="19"/>
    </location>
    <ligand>
        <name>Mg(2+)</name>
        <dbReference type="ChEBI" id="CHEBI:18420"/>
    </ligand>
</feature>
<feature type="binding site" evidence="1">
    <location>
        <position position="21"/>
    </location>
    <ligand>
        <name>Mg(2+)</name>
        <dbReference type="ChEBI" id="CHEBI:18420"/>
    </ligand>
</feature>
<feature type="binding site" evidence="1">
    <location>
        <position position="182"/>
    </location>
    <ligand>
        <name>Mg(2+)</name>
        <dbReference type="ChEBI" id="CHEBI:18420"/>
    </ligand>
</feature>
<comment type="function">
    <text evidence="1">Specifically catalyzes the dephosphorylation of 2-phosphoglycolate. Is involved in the dissimilation of the intracellular 2-phosphoglycolate formed during the DNA repair of 3'-phosphoglycolate ends, a major class of DNA lesions induced by oxidative stress.</text>
</comment>
<comment type="catalytic activity">
    <reaction evidence="1">
        <text>2-phosphoglycolate + H2O = glycolate + phosphate</text>
        <dbReference type="Rhea" id="RHEA:14369"/>
        <dbReference type="ChEBI" id="CHEBI:15377"/>
        <dbReference type="ChEBI" id="CHEBI:29805"/>
        <dbReference type="ChEBI" id="CHEBI:43474"/>
        <dbReference type="ChEBI" id="CHEBI:58033"/>
        <dbReference type="EC" id="3.1.3.18"/>
    </reaction>
</comment>
<comment type="cofactor">
    <cofactor evidence="1">
        <name>Mg(2+)</name>
        <dbReference type="ChEBI" id="CHEBI:18420"/>
    </cofactor>
</comment>
<comment type="pathway">
    <text evidence="1">Organic acid metabolism; glycolate biosynthesis; glycolate from 2-phosphoglycolate: step 1/1.</text>
</comment>
<comment type="similarity">
    <text evidence="1">Belongs to the HAD-like hydrolase superfamily. CbbY/CbbZ/Gph/YieH family.</text>
</comment>
<comment type="sequence caution" evidence="2">
    <conflict type="erroneous initiation">
        <sequence resource="EMBL-CDS" id="AAZ36472"/>
    </conflict>
    <text>Truncated N-terminus.</text>
</comment>